<evidence type="ECO:0000255" key="1">
    <source>
        <dbReference type="HAMAP-Rule" id="MF_01865"/>
    </source>
</evidence>
<evidence type="ECO:0000255" key="2">
    <source>
        <dbReference type="PROSITE-ProRule" id="PRU01266"/>
    </source>
</evidence>
<name>RIMO_NITEU</name>
<gene>
    <name evidence="1" type="primary">rimO</name>
    <name type="ordered locus">NE0911</name>
</gene>
<dbReference type="EC" id="2.8.4.4" evidence="1"/>
<dbReference type="EMBL" id="AL954747">
    <property type="protein sequence ID" value="CAD84822.1"/>
    <property type="molecule type" value="Genomic_DNA"/>
</dbReference>
<dbReference type="RefSeq" id="WP_011111522.1">
    <property type="nucleotide sequence ID" value="NC_004757.1"/>
</dbReference>
<dbReference type="SMR" id="Q82VY8"/>
<dbReference type="STRING" id="228410.NE0911"/>
<dbReference type="GeneID" id="87104103"/>
<dbReference type="KEGG" id="neu:NE0911"/>
<dbReference type="eggNOG" id="COG0621">
    <property type="taxonomic scope" value="Bacteria"/>
</dbReference>
<dbReference type="HOGENOM" id="CLU_018697_0_0_4"/>
<dbReference type="OrthoDB" id="9805215at2"/>
<dbReference type="PhylomeDB" id="Q82VY8"/>
<dbReference type="Proteomes" id="UP000001416">
    <property type="component" value="Chromosome"/>
</dbReference>
<dbReference type="GO" id="GO:0005829">
    <property type="term" value="C:cytosol"/>
    <property type="evidence" value="ECO:0007669"/>
    <property type="project" value="TreeGrafter"/>
</dbReference>
<dbReference type="GO" id="GO:0051539">
    <property type="term" value="F:4 iron, 4 sulfur cluster binding"/>
    <property type="evidence" value="ECO:0007669"/>
    <property type="project" value="UniProtKB-UniRule"/>
</dbReference>
<dbReference type="GO" id="GO:0035599">
    <property type="term" value="F:aspartic acid methylthiotransferase activity"/>
    <property type="evidence" value="ECO:0007669"/>
    <property type="project" value="TreeGrafter"/>
</dbReference>
<dbReference type="GO" id="GO:0046872">
    <property type="term" value="F:metal ion binding"/>
    <property type="evidence" value="ECO:0007669"/>
    <property type="project" value="UniProtKB-KW"/>
</dbReference>
<dbReference type="GO" id="GO:0103039">
    <property type="term" value="F:protein methylthiotransferase activity"/>
    <property type="evidence" value="ECO:0007669"/>
    <property type="project" value="UniProtKB-EC"/>
</dbReference>
<dbReference type="GO" id="GO:0006400">
    <property type="term" value="P:tRNA modification"/>
    <property type="evidence" value="ECO:0007669"/>
    <property type="project" value="InterPro"/>
</dbReference>
<dbReference type="CDD" id="cd01335">
    <property type="entry name" value="Radical_SAM"/>
    <property type="match status" value="1"/>
</dbReference>
<dbReference type="FunFam" id="3.40.50.12160:FF:000002">
    <property type="entry name" value="Ribosomal protein S12 methylthiotransferase RimO"/>
    <property type="match status" value="1"/>
</dbReference>
<dbReference type="FunFam" id="3.80.30.20:FF:000001">
    <property type="entry name" value="tRNA-2-methylthio-N(6)-dimethylallyladenosine synthase 2"/>
    <property type="match status" value="1"/>
</dbReference>
<dbReference type="Gene3D" id="3.40.50.12160">
    <property type="entry name" value="Methylthiotransferase, N-terminal domain"/>
    <property type="match status" value="1"/>
</dbReference>
<dbReference type="Gene3D" id="2.40.50.140">
    <property type="entry name" value="Nucleic acid-binding proteins"/>
    <property type="match status" value="1"/>
</dbReference>
<dbReference type="Gene3D" id="3.80.30.20">
    <property type="entry name" value="tm_1862 like domain"/>
    <property type="match status" value="1"/>
</dbReference>
<dbReference type="HAMAP" id="MF_01865">
    <property type="entry name" value="MTTase_RimO"/>
    <property type="match status" value="1"/>
</dbReference>
<dbReference type="InterPro" id="IPR006638">
    <property type="entry name" value="Elp3/MiaA/NifB-like_rSAM"/>
</dbReference>
<dbReference type="InterPro" id="IPR005839">
    <property type="entry name" value="Methylthiotransferase"/>
</dbReference>
<dbReference type="InterPro" id="IPR020612">
    <property type="entry name" value="Methylthiotransferase_CS"/>
</dbReference>
<dbReference type="InterPro" id="IPR013848">
    <property type="entry name" value="Methylthiotransferase_N"/>
</dbReference>
<dbReference type="InterPro" id="IPR038135">
    <property type="entry name" value="Methylthiotransferase_N_sf"/>
</dbReference>
<dbReference type="InterPro" id="IPR012340">
    <property type="entry name" value="NA-bd_OB-fold"/>
</dbReference>
<dbReference type="InterPro" id="IPR005840">
    <property type="entry name" value="Ribosomal_uS12_MeSTrfase_RimO"/>
</dbReference>
<dbReference type="InterPro" id="IPR007197">
    <property type="entry name" value="rSAM"/>
</dbReference>
<dbReference type="InterPro" id="IPR023404">
    <property type="entry name" value="rSAM_horseshoe"/>
</dbReference>
<dbReference type="InterPro" id="IPR002792">
    <property type="entry name" value="TRAM_dom"/>
</dbReference>
<dbReference type="NCBIfam" id="TIGR01125">
    <property type="entry name" value="30S ribosomal protein S12 methylthiotransferase RimO"/>
    <property type="match status" value="1"/>
</dbReference>
<dbReference type="NCBIfam" id="TIGR00089">
    <property type="entry name" value="MiaB/RimO family radical SAM methylthiotransferase"/>
    <property type="match status" value="1"/>
</dbReference>
<dbReference type="PANTHER" id="PTHR43837">
    <property type="entry name" value="RIBOSOMAL PROTEIN S12 METHYLTHIOTRANSFERASE RIMO"/>
    <property type="match status" value="1"/>
</dbReference>
<dbReference type="PANTHER" id="PTHR43837:SF1">
    <property type="entry name" value="RIBOSOMAL PROTEIN US12 METHYLTHIOTRANSFERASE RIMO"/>
    <property type="match status" value="1"/>
</dbReference>
<dbReference type="Pfam" id="PF04055">
    <property type="entry name" value="Radical_SAM"/>
    <property type="match status" value="1"/>
</dbReference>
<dbReference type="Pfam" id="PF18693">
    <property type="entry name" value="TRAM_2"/>
    <property type="match status" value="1"/>
</dbReference>
<dbReference type="Pfam" id="PF00919">
    <property type="entry name" value="UPF0004"/>
    <property type="match status" value="1"/>
</dbReference>
<dbReference type="SFLD" id="SFLDG01082">
    <property type="entry name" value="B12-binding_domain_containing"/>
    <property type="match status" value="1"/>
</dbReference>
<dbReference type="SFLD" id="SFLDS00029">
    <property type="entry name" value="Radical_SAM"/>
    <property type="match status" value="1"/>
</dbReference>
<dbReference type="SFLD" id="SFLDF00274">
    <property type="entry name" value="ribosomal_protein_S12_methylth"/>
    <property type="match status" value="1"/>
</dbReference>
<dbReference type="SMART" id="SM00729">
    <property type="entry name" value="Elp3"/>
    <property type="match status" value="1"/>
</dbReference>
<dbReference type="SUPFAM" id="SSF102114">
    <property type="entry name" value="Radical SAM enzymes"/>
    <property type="match status" value="1"/>
</dbReference>
<dbReference type="PROSITE" id="PS51449">
    <property type="entry name" value="MTTASE_N"/>
    <property type="match status" value="1"/>
</dbReference>
<dbReference type="PROSITE" id="PS01278">
    <property type="entry name" value="MTTASE_RADICAL"/>
    <property type="match status" value="1"/>
</dbReference>
<dbReference type="PROSITE" id="PS51918">
    <property type="entry name" value="RADICAL_SAM"/>
    <property type="match status" value="1"/>
</dbReference>
<dbReference type="PROSITE" id="PS50926">
    <property type="entry name" value="TRAM"/>
    <property type="match status" value="1"/>
</dbReference>
<proteinExistence type="inferred from homology"/>
<comment type="function">
    <text evidence="1">Catalyzes the methylthiolation of an aspartic acid residue of ribosomal protein uS12.</text>
</comment>
<comment type="catalytic activity">
    <reaction evidence="1">
        <text>L-aspartate(89)-[ribosomal protein uS12]-hydrogen + (sulfur carrier)-SH + AH2 + 2 S-adenosyl-L-methionine = 3-methylsulfanyl-L-aspartate(89)-[ribosomal protein uS12]-hydrogen + (sulfur carrier)-H + 5'-deoxyadenosine + L-methionine + A + S-adenosyl-L-homocysteine + 2 H(+)</text>
        <dbReference type="Rhea" id="RHEA:37087"/>
        <dbReference type="Rhea" id="RHEA-COMP:10460"/>
        <dbReference type="Rhea" id="RHEA-COMP:10461"/>
        <dbReference type="Rhea" id="RHEA-COMP:14737"/>
        <dbReference type="Rhea" id="RHEA-COMP:14739"/>
        <dbReference type="ChEBI" id="CHEBI:13193"/>
        <dbReference type="ChEBI" id="CHEBI:15378"/>
        <dbReference type="ChEBI" id="CHEBI:17319"/>
        <dbReference type="ChEBI" id="CHEBI:17499"/>
        <dbReference type="ChEBI" id="CHEBI:29917"/>
        <dbReference type="ChEBI" id="CHEBI:29961"/>
        <dbReference type="ChEBI" id="CHEBI:57844"/>
        <dbReference type="ChEBI" id="CHEBI:57856"/>
        <dbReference type="ChEBI" id="CHEBI:59789"/>
        <dbReference type="ChEBI" id="CHEBI:64428"/>
        <dbReference type="ChEBI" id="CHEBI:73599"/>
        <dbReference type="EC" id="2.8.4.4"/>
    </reaction>
</comment>
<comment type="cofactor">
    <cofactor evidence="1">
        <name>[4Fe-4S] cluster</name>
        <dbReference type="ChEBI" id="CHEBI:49883"/>
    </cofactor>
    <text evidence="1">Binds 2 [4Fe-4S] clusters. One cluster is coordinated with 3 cysteines and an exchangeable S-adenosyl-L-methionine.</text>
</comment>
<comment type="subcellular location">
    <subcellularLocation>
        <location evidence="1">Cytoplasm</location>
    </subcellularLocation>
</comment>
<comment type="similarity">
    <text evidence="1">Belongs to the methylthiotransferase family. RimO subfamily.</text>
</comment>
<protein>
    <recommendedName>
        <fullName evidence="1">Ribosomal protein uS12 methylthiotransferase RimO</fullName>
        <shortName evidence="1">uS12 MTTase</shortName>
        <shortName evidence="1">uS12 methylthiotransferase</shortName>
        <ecNumber evidence="1">2.8.4.4</ecNumber>
    </recommendedName>
    <alternativeName>
        <fullName evidence="1">Ribosomal protein uS12 (aspartate-C(3))-methylthiotransferase</fullName>
    </alternativeName>
    <alternativeName>
        <fullName evidence="1">Ribosome maturation factor RimO</fullName>
    </alternativeName>
</protein>
<reference key="1">
    <citation type="journal article" date="2003" name="J. Bacteriol.">
        <title>Complete genome sequence of the ammonia-oxidizing bacterium and obligate chemolithoautotroph Nitrosomonas europaea.</title>
        <authorList>
            <person name="Chain P."/>
            <person name="Lamerdin J.E."/>
            <person name="Larimer F.W."/>
            <person name="Regala W."/>
            <person name="Lao V."/>
            <person name="Land M.L."/>
            <person name="Hauser L."/>
            <person name="Hooper A.B."/>
            <person name="Klotz M.G."/>
            <person name="Norton J."/>
            <person name="Sayavedra-Soto L.A."/>
            <person name="Arciero D.M."/>
            <person name="Hommes N.G."/>
            <person name="Whittaker M.M."/>
            <person name="Arp D.J."/>
        </authorList>
    </citation>
    <scope>NUCLEOTIDE SEQUENCE [LARGE SCALE GENOMIC DNA]</scope>
    <source>
        <strain>ATCC 19718 / CIP 103999 / KCTC 2705 / NBRC 14298</strain>
    </source>
</reference>
<accession>Q82VY8</accession>
<organism>
    <name type="scientific">Nitrosomonas europaea (strain ATCC 19718 / CIP 103999 / KCTC 2705 / NBRC 14298)</name>
    <dbReference type="NCBI Taxonomy" id="228410"/>
    <lineage>
        <taxon>Bacteria</taxon>
        <taxon>Pseudomonadati</taxon>
        <taxon>Pseudomonadota</taxon>
        <taxon>Betaproteobacteria</taxon>
        <taxon>Nitrosomonadales</taxon>
        <taxon>Nitrosomonadaceae</taxon>
        <taxon>Nitrosomonas</taxon>
    </lineage>
</organism>
<keyword id="KW-0004">4Fe-4S</keyword>
<keyword id="KW-0963">Cytoplasm</keyword>
<keyword id="KW-0408">Iron</keyword>
<keyword id="KW-0411">Iron-sulfur</keyword>
<keyword id="KW-0479">Metal-binding</keyword>
<keyword id="KW-1185">Reference proteome</keyword>
<keyword id="KW-0949">S-adenosyl-L-methionine</keyword>
<keyword id="KW-0808">Transferase</keyword>
<sequence length="447" mass="49599">MTSASSATIQPPRIPRVGFVSLGCPKATVDSERILTCLRAEGYLISPSYADADLVVVNTCGFIDSAVAESLETIGEALTENGKVIVTGCLGAKEDVIRQAHPSVLAVTGPQATEEVMQAIHRHLPKPHDPYLDLVPPQGIKLTPKHYAYLKISEGCNHRCTFCIIPSMRGDLVSRPVGNVLQEAQNLVDAGVRELLIISQDTSAYGVDIKYRTGFWQGRPIRSRITELARALGELGIWIRLHYVYPYPHVDELIPLMAEGKLLPYLDIPFQHGSKRILKLMKRPANSENVLARIRQWRDICPDIALRSTFIVGFPGETEQEFEELLAFLEEAQLDRVGAFAYSPVKGAAANALPDPVPSEIQQERLARLMQWQEEISKKRLAGKKGRILKVLVDTVDENGVIARSYADAPEIDGVVYIEPDFSIKPGDWVDVRITRTGIHDLWAKKI</sequence>
<feature type="chain" id="PRO_0000374902" description="Ribosomal protein uS12 methylthiotransferase RimO">
    <location>
        <begin position="1"/>
        <end position="447"/>
    </location>
</feature>
<feature type="domain" description="MTTase N-terminal" evidence="1">
    <location>
        <begin position="15"/>
        <end position="125"/>
    </location>
</feature>
<feature type="domain" description="Radical SAM core" evidence="2">
    <location>
        <begin position="142"/>
        <end position="379"/>
    </location>
</feature>
<feature type="domain" description="TRAM" evidence="1">
    <location>
        <begin position="379"/>
        <end position="447"/>
    </location>
</feature>
<feature type="binding site" evidence="1">
    <location>
        <position position="24"/>
    </location>
    <ligand>
        <name>[4Fe-4S] cluster</name>
        <dbReference type="ChEBI" id="CHEBI:49883"/>
        <label>1</label>
    </ligand>
</feature>
<feature type="binding site" evidence="1">
    <location>
        <position position="60"/>
    </location>
    <ligand>
        <name>[4Fe-4S] cluster</name>
        <dbReference type="ChEBI" id="CHEBI:49883"/>
        <label>1</label>
    </ligand>
</feature>
<feature type="binding site" evidence="1">
    <location>
        <position position="89"/>
    </location>
    <ligand>
        <name>[4Fe-4S] cluster</name>
        <dbReference type="ChEBI" id="CHEBI:49883"/>
        <label>1</label>
    </ligand>
</feature>
<feature type="binding site" evidence="1">
    <location>
        <position position="156"/>
    </location>
    <ligand>
        <name>[4Fe-4S] cluster</name>
        <dbReference type="ChEBI" id="CHEBI:49883"/>
        <label>2</label>
        <note>4Fe-4S-S-AdoMet</note>
    </ligand>
</feature>
<feature type="binding site" evidence="1">
    <location>
        <position position="160"/>
    </location>
    <ligand>
        <name>[4Fe-4S] cluster</name>
        <dbReference type="ChEBI" id="CHEBI:49883"/>
        <label>2</label>
        <note>4Fe-4S-S-AdoMet</note>
    </ligand>
</feature>
<feature type="binding site" evidence="1">
    <location>
        <position position="163"/>
    </location>
    <ligand>
        <name>[4Fe-4S] cluster</name>
        <dbReference type="ChEBI" id="CHEBI:49883"/>
        <label>2</label>
        <note>4Fe-4S-S-AdoMet</note>
    </ligand>
</feature>